<proteinExistence type="inferred from homology"/>
<evidence type="ECO:0000255" key="1">
    <source>
        <dbReference type="HAMAP-Rule" id="MF_00184"/>
    </source>
</evidence>
<keyword id="KW-0030">Aminoacyl-tRNA synthetase</keyword>
<keyword id="KW-0067">ATP-binding</keyword>
<keyword id="KW-0963">Cytoplasm</keyword>
<keyword id="KW-0436">Ligase</keyword>
<keyword id="KW-0479">Metal-binding</keyword>
<keyword id="KW-0547">Nucleotide-binding</keyword>
<keyword id="KW-0648">Protein biosynthesis</keyword>
<keyword id="KW-1185">Reference proteome</keyword>
<keyword id="KW-0694">RNA-binding</keyword>
<keyword id="KW-0820">tRNA-binding</keyword>
<keyword id="KW-0862">Zinc</keyword>
<organism>
    <name type="scientific">Helicobacter hepaticus (strain ATCC 51449 / 3B1)</name>
    <dbReference type="NCBI Taxonomy" id="235279"/>
    <lineage>
        <taxon>Bacteria</taxon>
        <taxon>Pseudomonadati</taxon>
        <taxon>Campylobacterota</taxon>
        <taxon>Epsilonproteobacteria</taxon>
        <taxon>Campylobacterales</taxon>
        <taxon>Helicobacteraceae</taxon>
        <taxon>Helicobacter</taxon>
    </lineage>
</organism>
<sequence>MSEVIGIKHNQHIYDLCTADELGITGDSISFDNSQESLAIIRHSCAHLMAQAIKILYPEAQFFVGPVVDEGFYYDFKVNTKISEEDLLVIEAKMKEIAKNAYPITKITLSRKEAQARFAHDELKVAVMSRIPDEKLSIYTQGDFEDLCRGPHLPNTKLLEHFKLTKIAGAYLGGDENAQMLIRIYGIAFADKQSLKDYLFTLEEAKKRDHRKLGQEMGLFTFDEEIGAGLPIWLPKGARLRHNIEHLLTQALKERGYEPVRGPEILKSDVWKKSGHYSNYKENMYFTIIDEQEYGIKPMNCVGHIKVYQSSPRSYRELPLRFYEYGIVHRHERSGVLHGLLRVREFTQDDAHIFCMTSQIKSEVNQILDFTKGIMNAFGFHYEMELSTRPQKSIGNDEVWENATAALKSALEENHISYQIDEGGGAFYGPKIDIKITDALKRKWQCGTIQIDMNLPERFELSYTDEHNVQVQPVMIHRAILGSFERFVAILTEHFGGEFPLFIAPTQVILIPIGEAQLEYARILRDKIITQSGAYAELMDKNESLSKKIRLAEKQRVPLIVVIGAKEVESKILAIRDRREKSQYELPEEAFIATLKTKIGEVSF</sequence>
<dbReference type="EC" id="6.1.1.3" evidence="1"/>
<dbReference type="EMBL" id="AE017125">
    <property type="protein sequence ID" value="AAP77039.1"/>
    <property type="molecule type" value="Genomic_DNA"/>
</dbReference>
<dbReference type="RefSeq" id="WP_011115284.1">
    <property type="nucleotide sequence ID" value="NC_004917.1"/>
</dbReference>
<dbReference type="SMR" id="Q7VJ09"/>
<dbReference type="STRING" id="235279.HH_0442"/>
<dbReference type="KEGG" id="hhe:HH_0442"/>
<dbReference type="eggNOG" id="COG0441">
    <property type="taxonomic scope" value="Bacteria"/>
</dbReference>
<dbReference type="HOGENOM" id="CLU_008554_0_1_7"/>
<dbReference type="OrthoDB" id="9802304at2"/>
<dbReference type="Proteomes" id="UP000002495">
    <property type="component" value="Chromosome"/>
</dbReference>
<dbReference type="GO" id="GO:0005829">
    <property type="term" value="C:cytosol"/>
    <property type="evidence" value="ECO:0007669"/>
    <property type="project" value="TreeGrafter"/>
</dbReference>
<dbReference type="GO" id="GO:0005524">
    <property type="term" value="F:ATP binding"/>
    <property type="evidence" value="ECO:0007669"/>
    <property type="project" value="UniProtKB-UniRule"/>
</dbReference>
<dbReference type="GO" id="GO:0046872">
    <property type="term" value="F:metal ion binding"/>
    <property type="evidence" value="ECO:0007669"/>
    <property type="project" value="UniProtKB-KW"/>
</dbReference>
<dbReference type="GO" id="GO:0004829">
    <property type="term" value="F:threonine-tRNA ligase activity"/>
    <property type="evidence" value="ECO:0007669"/>
    <property type="project" value="UniProtKB-UniRule"/>
</dbReference>
<dbReference type="GO" id="GO:0000049">
    <property type="term" value="F:tRNA binding"/>
    <property type="evidence" value="ECO:0007669"/>
    <property type="project" value="UniProtKB-KW"/>
</dbReference>
<dbReference type="GO" id="GO:0006435">
    <property type="term" value="P:threonyl-tRNA aminoacylation"/>
    <property type="evidence" value="ECO:0007669"/>
    <property type="project" value="UniProtKB-UniRule"/>
</dbReference>
<dbReference type="CDD" id="cd00860">
    <property type="entry name" value="ThrRS_anticodon"/>
    <property type="match status" value="1"/>
</dbReference>
<dbReference type="CDD" id="cd00771">
    <property type="entry name" value="ThrRS_core"/>
    <property type="match status" value="1"/>
</dbReference>
<dbReference type="FunFam" id="3.30.930.10:FF:000019">
    <property type="entry name" value="Threonine--tRNA ligase"/>
    <property type="match status" value="1"/>
</dbReference>
<dbReference type="FunFam" id="3.30.980.10:FF:000005">
    <property type="entry name" value="Threonyl-tRNA synthetase, mitochondrial"/>
    <property type="match status" value="1"/>
</dbReference>
<dbReference type="Gene3D" id="3.30.54.20">
    <property type="match status" value="1"/>
</dbReference>
<dbReference type="Gene3D" id="3.40.50.800">
    <property type="entry name" value="Anticodon-binding domain"/>
    <property type="match status" value="1"/>
</dbReference>
<dbReference type="Gene3D" id="3.30.930.10">
    <property type="entry name" value="Bira Bifunctional Protein, Domain 2"/>
    <property type="match status" value="1"/>
</dbReference>
<dbReference type="Gene3D" id="3.30.980.10">
    <property type="entry name" value="Threonyl-trna Synthetase, Chain A, domain 2"/>
    <property type="match status" value="1"/>
</dbReference>
<dbReference type="HAMAP" id="MF_00184">
    <property type="entry name" value="Thr_tRNA_synth"/>
    <property type="match status" value="1"/>
</dbReference>
<dbReference type="InterPro" id="IPR002314">
    <property type="entry name" value="aa-tRNA-synt_IIb"/>
</dbReference>
<dbReference type="InterPro" id="IPR006195">
    <property type="entry name" value="aa-tRNA-synth_II"/>
</dbReference>
<dbReference type="InterPro" id="IPR045864">
    <property type="entry name" value="aa-tRNA-synth_II/BPL/LPL"/>
</dbReference>
<dbReference type="InterPro" id="IPR004154">
    <property type="entry name" value="Anticodon-bd"/>
</dbReference>
<dbReference type="InterPro" id="IPR036621">
    <property type="entry name" value="Anticodon-bd_dom_sf"/>
</dbReference>
<dbReference type="InterPro" id="IPR002320">
    <property type="entry name" value="Thr-tRNA-ligase_IIa"/>
</dbReference>
<dbReference type="InterPro" id="IPR018163">
    <property type="entry name" value="Thr/Ala-tRNA-synth_IIc_edit"/>
</dbReference>
<dbReference type="InterPro" id="IPR047246">
    <property type="entry name" value="ThrRS_anticodon"/>
</dbReference>
<dbReference type="InterPro" id="IPR033728">
    <property type="entry name" value="ThrRS_core"/>
</dbReference>
<dbReference type="InterPro" id="IPR012947">
    <property type="entry name" value="tRNA_SAD"/>
</dbReference>
<dbReference type="NCBIfam" id="TIGR00418">
    <property type="entry name" value="thrS"/>
    <property type="match status" value="1"/>
</dbReference>
<dbReference type="PANTHER" id="PTHR11451:SF44">
    <property type="entry name" value="THREONINE--TRNA LIGASE, CHLOROPLASTIC_MITOCHONDRIAL 2"/>
    <property type="match status" value="1"/>
</dbReference>
<dbReference type="PANTHER" id="PTHR11451">
    <property type="entry name" value="THREONINE-TRNA LIGASE"/>
    <property type="match status" value="1"/>
</dbReference>
<dbReference type="Pfam" id="PF03129">
    <property type="entry name" value="HGTP_anticodon"/>
    <property type="match status" value="1"/>
</dbReference>
<dbReference type="Pfam" id="PF00587">
    <property type="entry name" value="tRNA-synt_2b"/>
    <property type="match status" value="1"/>
</dbReference>
<dbReference type="Pfam" id="PF07973">
    <property type="entry name" value="tRNA_SAD"/>
    <property type="match status" value="1"/>
</dbReference>
<dbReference type="PRINTS" id="PR01047">
    <property type="entry name" value="TRNASYNTHTHR"/>
</dbReference>
<dbReference type="SMART" id="SM00863">
    <property type="entry name" value="tRNA_SAD"/>
    <property type="match status" value="1"/>
</dbReference>
<dbReference type="SUPFAM" id="SSF52954">
    <property type="entry name" value="Class II aaRS ABD-related"/>
    <property type="match status" value="1"/>
</dbReference>
<dbReference type="SUPFAM" id="SSF55681">
    <property type="entry name" value="Class II aaRS and biotin synthetases"/>
    <property type="match status" value="1"/>
</dbReference>
<dbReference type="SUPFAM" id="SSF55186">
    <property type="entry name" value="ThrRS/AlaRS common domain"/>
    <property type="match status" value="1"/>
</dbReference>
<dbReference type="PROSITE" id="PS50862">
    <property type="entry name" value="AA_TRNA_LIGASE_II"/>
    <property type="match status" value="1"/>
</dbReference>
<name>SYT_HELHP</name>
<feature type="chain" id="PRO_0000100988" description="Threonine--tRNA ligase">
    <location>
        <begin position="1"/>
        <end position="604"/>
    </location>
</feature>
<feature type="region of interest" description="Catalytic" evidence="1">
    <location>
        <begin position="209"/>
        <end position="500"/>
    </location>
</feature>
<feature type="binding site" evidence="1">
    <location>
        <position position="301"/>
    </location>
    <ligand>
        <name>Zn(2+)</name>
        <dbReference type="ChEBI" id="CHEBI:29105"/>
    </ligand>
</feature>
<feature type="binding site" evidence="1">
    <location>
        <position position="352"/>
    </location>
    <ligand>
        <name>Zn(2+)</name>
        <dbReference type="ChEBI" id="CHEBI:29105"/>
    </ligand>
</feature>
<feature type="binding site" evidence="1">
    <location>
        <position position="477"/>
    </location>
    <ligand>
        <name>Zn(2+)</name>
        <dbReference type="ChEBI" id="CHEBI:29105"/>
    </ligand>
</feature>
<accession>Q7VJ09</accession>
<protein>
    <recommendedName>
        <fullName evidence="1">Threonine--tRNA ligase</fullName>
        <ecNumber evidence="1">6.1.1.3</ecNumber>
    </recommendedName>
    <alternativeName>
        <fullName evidence="1">Threonyl-tRNA synthetase</fullName>
        <shortName evidence="1">ThrRS</shortName>
    </alternativeName>
</protein>
<reference key="1">
    <citation type="journal article" date="2003" name="Proc. Natl. Acad. Sci. U.S.A.">
        <title>The complete genome sequence of the carcinogenic bacterium Helicobacter hepaticus.</title>
        <authorList>
            <person name="Suerbaum S."/>
            <person name="Josenhans C."/>
            <person name="Sterzenbach T."/>
            <person name="Drescher B."/>
            <person name="Brandt P."/>
            <person name="Bell M."/>
            <person name="Droege M."/>
            <person name="Fartmann B."/>
            <person name="Fischer H.-P."/>
            <person name="Ge Z."/>
            <person name="Hoerster A."/>
            <person name="Holland R."/>
            <person name="Klein K."/>
            <person name="Koenig J."/>
            <person name="Macko L."/>
            <person name="Mendz G.L."/>
            <person name="Nyakatura G."/>
            <person name="Schauer D.B."/>
            <person name="Shen Z."/>
            <person name="Weber J."/>
            <person name="Frosch M."/>
            <person name="Fox J.G."/>
        </authorList>
    </citation>
    <scope>NUCLEOTIDE SEQUENCE [LARGE SCALE GENOMIC DNA]</scope>
    <source>
        <strain>ATCC 51449 / 3B1</strain>
    </source>
</reference>
<gene>
    <name evidence="1" type="primary">thrS</name>
    <name type="ordered locus">HH_0442</name>
</gene>
<comment type="function">
    <text evidence="1">Catalyzes the attachment of threonine to tRNA(Thr) in a two-step reaction: L-threonine is first activated by ATP to form Thr-AMP and then transferred to the acceptor end of tRNA(Thr). Also edits incorrectly charged L-seryl-tRNA(Thr).</text>
</comment>
<comment type="catalytic activity">
    <reaction evidence="1">
        <text>tRNA(Thr) + L-threonine + ATP = L-threonyl-tRNA(Thr) + AMP + diphosphate + H(+)</text>
        <dbReference type="Rhea" id="RHEA:24624"/>
        <dbReference type="Rhea" id="RHEA-COMP:9670"/>
        <dbReference type="Rhea" id="RHEA-COMP:9704"/>
        <dbReference type="ChEBI" id="CHEBI:15378"/>
        <dbReference type="ChEBI" id="CHEBI:30616"/>
        <dbReference type="ChEBI" id="CHEBI:33019"/>
        <dbReference type="ChEBI" id="CHEBI:57926"/>
        <dbReference type="ChEBI" id="CHEBI:78442"/>
        <dbReference type="ChEBI" id="CHEBI:78534"/>
        <dbReference type="ChEBI" id="CHEBI:456215"/>
        <dbReference type="EC" id="6.1.1.3"/>
    </reaction>
</comment>
<comment type="cofactor">
    <cofactor evidence="1">
        <name>Zn(2+)</name>
        <dbReference type="ChEBI" id="CHEBI:29105"/>
    </cofactor>
    <text evidence="1">Binds 1 zinc ion per subunit.</text>
</comment>
<comment type="subunit">
    <text evidence="1">Homodimer.</text>
</comment>
<comment type="subcellular location">
    <subcellularLocation>
        <location evidence="1">Cytoplasm</location>
    </subcellularLocation>
</comment>
<comment type="similarity">
    <text evidence="1">Belongs to the class-II aminoacyl-tRNA synthetase family.</text>
</comment>